<proteinExistence type="inferred from homology"/>
<gene>
    <name type="primary">ATP23</name>
    <name type="ordered locus">CAALFM_C206950CA</name>
    <name type="ORF">CaO19.2249</name>
    <name type="ORF">CaO19.9789</name>
</gene>
<accession>Q59Z51</accession>
<accession>A0A1D8PHW8</accession>
<dbReference type="EC" id="3.4.24.-"/>
<dbReference type="EMBL" id="CP017624">
    <property type="protein sequence ID" value="AOW27695.1"/>
    <property type="molecule type" value="Genomic_DNA"/>
</dbReference>
<dbReference type="RefSeq" id="XP_714839.2">
    <property type="nucleotide sequence ID" value="XM_709746.2"/>
</dbReference>
<dbReference type="FunCoup" id="Q59Z51">
    <property type="interactions" value="506"/>
</dbReference>
<dbReference type="STRING" id="237561.Q59Z51"/>
<dbReference type="MEROPS" id="M76.002"/>
<dbReference type="EnsemblFungi" id="C2_06950C_A-T">
    <property type="protein sequence ID" value="C2_06950C_A-T-p1"/>
    <property type="gene ID" value="C2_06950C_A"/>
</dbReference>
<dbReference type="GeneID" id="3643527"/>
<dbReference type="KEGG" id="cal:CAALFM_C206950CA"/>
<dbReference type="CGD" id="CAL0000186668">
    <property type="gene designation" value="orf19.9789"/>
</dbReference>
<dbReference type="VEuPathDB" id="FungiDB:C2_06950C_A"/>
<dbReference type="eggNOG" id="KOG3314">
    <property type="taxonomic scope" value="Eukaryota"/>
</dbReference>
<dbReference type="HOGENOM" id="CLU_079125_0_0_1"/>
<dbReference type="InParanoid" id="Q59Z51"/>
<dbReference type="OrthoDB" id="285308at2759"/>
<dbReference type="PRO" id="PR:Q59Z51"/>
<dbReference type="Proteomes" id="UP000000559">
    <property type="component" value="Chromosome 2"/>
</dbReference>
<dbReference type="GO" id="GO:0005743">
    <property type="term" value="C:mitochondrial inner membrane"/>
    <property type="evidence" value="ECO:0007669"/>
    <property type="project" value="UniProtKB-SubCell"/>
</dbReference>
<dbReference type="GO" id="GO:0046872">
    <property type="term" value="F:metal ion binding"/>
    <property type="evidence" value="ECO:0007669"/>
    <property type="project" value="UniProtKB-KW"/>
</dbReference>
<dbReference type="GO" id="GO:0004222">
    <property type="term" value="F:metalloendopeptidase activity"/>
    <property type="evidence" value="ECO:0007669"/>
    <property type="project" value="InterPro"/>
</dbReference>
<dbReference type="GO" id="GO:0034982">
    <property type="term" value="P:mitochondrial protein processing"/>
    <property type="evidence" value="ECO:0000318"/>
    <property type="project" value="GO_Central"/>
</dbReference>
<dbReference type="GO" id="GO:0033615">
    <property type="term" value="P:mitochondrial proton-transporting ATP synthase complex assembly"/>
    <property type="evidence" value="ECO:0000318"/>
    <property type="project" value="GO_Central"/>
</dbReference>
<dbReference type="InterPro" id="IPR019165">
    <property type="entry name" value="Peptidase_M76_ATP23"/>
</dbReference>
<dbReference type="PANTHER" id="PTHR21711">
    <property type="entry name" value="MITOCHONDRIAL INNER MEMBRANE PROTEASE"/>
    <property type="match status" value="1"/>
</dbReference>
<dbReference type="PANTHER" id="PTHR21711:SF0">
    <property type="entry name" value="MITOCHONDRIAL INNER MEMBRANE PROTEASE ATP23 HOMOLOG"/>
    <property type="match status" value="1"/>
</dbReference>
<dbReference type="Pfam" id="PF09768">
    <property type="entry name" value="Peptidase_M76"/>
    <property type="match status" value="1"/>
</dbReference>
<dbReference type="PROSITE" id="PS00142">
    <property type="entry name" value="ZINC_PROTEASE"/>
    <property type="match status" value="1"/>
</dbReference>
<organism>
    <name type="scientific">Candida albicans (strain SC5314 / ATCC MYA-2876)</name>
    <name type="common">Yeast</name>
    <dbReference type="NCBI Taxonomy" id="237561"/>
    <lineage>
        <taxon>Eukaryota</taxon>
        <taxon>Fungi</taxon>
        <taxon>Dikarya</taxon>
        <taxon>Ascomycota</taxon>
        <taxon>Saccharomycotina</taxon>
        <taxon>Pichiomycetes</taxon>
        <taxon>Debaryomycetaceae</taxon>
        <taxon>Candida/Lodderomyces clade</taxon>
        <taxon>Candida</taxon>
    </lineage>
</organism>
<feature type="chain" id="PRO_0000330057" description="Mitochondrial inner membrane protease ATP23">
    <location>
        <begin position="1"/>
        <end position="238"/>
    </location>
</feature>
<feature type="active site" evidence="2">
    <location>
        <position position="139"/>
    </location>
</feature>
<feature type="binding site" evidence="1">
    <location>
        <position position="138"/>
    </location>
    <ligand>
        <name>a divalent metal cation</name>
        <dbReference type="ChEBI" id="CHEBI:60240"/>
        <note>catalytic</note>
    </ligand>
</feature>
<feature type="binding site" evidence="1">
    <location>
        <position position="142"/>
    </location>
    <ligand>
        <name>a divalent metal cation</name>
        <dbReference type="ChEBI" id="CHEBI:60240"/>
        <note>catalytic</note>
    </ligand>
</feature>
<keyword id="KW-0378">Hydrolase</keyword>
<keyword id="KW-0472">Membrane</keyword>
<keyword id="KW-0479">Metal-binding</keyword>
<keyword id="KW-0482">Metalloprotease</keyword>
<keyword id="KW-0496">Mitochondrion</keyword>
<keyword id="KW-0999">Mitochondrion inner membrane</keyword>
<keyword id="KW-0645">Protease</keyword>
<keyword id="KW-1185">Reference proteome</keyword>
<reference key="1">
    <citation type="journal article" date="2004" name="Proc. Natl. Acad. Sci. U.S.A.">
        <title>The diploid genome sequence of Candida albicans.</title>
        <authorList>
            <person name="Jones T."/>
            <person name="Federspiel N.A."/>
            <person name="Chibana H."/>
            <person name="Dungan J."/>
            <person name="Kalman S."/>
            <person name="Magee B.B."/>
            <person name="Newport G."/>
            <person name="Thorstenson Y.R."/>
            <person name="Agabian N."/>
            <person name="Magee P.T."/>
            <person name="Davis R.W."/>
            <person name="Scherer S."/>
        </authorList>
    </citation>
    <scope>NUCLEOTIDE SEQUENCE [LARGE SCALE GENOMIC DNA]</scope>
    <source>
        <strain>SC5314 / ATCC MYA-2876</strain>
    </source>
</reference>
<reference key="2">
    <citation type="journal article" date="2007" name="Genome Biol.">
        <title>Assembly of the Candida albicans genome into sixteen supercontigs aligned on the eight chromosomes.</title>
        <authorList>
            <person name="van het Hoog M."/>
            <person name="Rast T.J."/>
            <person name="Martchenko M."/>
            <person name="Grindle S."/>
            <person name="Dignard D."/>
            <person name="Hogues H."/>
            <person name="Cuomo C."/>
            <person name="Berriman M."/>
            <person name="Scherer S."/>
            <person name="Magee B.B."/>
            <person name="Whiteway M."/>
            <person name="Chibana H."/>
            <person name="Nantel A."/>
            <person name="Magee P.T."/>
        </authorList>
    </citation>
    <scope>GENOME REANNOTATION</scope>
    <source>
        <strain>SC5314 / ATCC MYA-2876</strain>
    </source>
</reference>
<reference key="3">
    <citation type="journal article" date="2013" name="Genome Biol.">
        <title>Assembly of a phased diploid Candida albicans genome facilitates allele-specific measurements and provides a simple model for repeat and indel structure.</title>
        <authorList>
            <person name="Muzzey D."/>
            <person name="Schwartz K."/>
            <person name="Weissman J.S."/>
            <person name="Sherlock G."/>
        </authorList>
    </citation>
    <scope>NUCLEOTIDE SEQUENCE [LARGE SCALE GENOMIC DNA]</scope>
    <scope>GENOME REANNOTATION</scope>
    <source>
        <strain>SC5314 / ATCC MYA-2876</strain>
    </source>
</reference>
<sequence length="238" mass="27807">MSTAAPQENSPELKLSPSSKLNGFEWWRRTLSYQTGLGLNAEEKAQYEFDYNNRNLAEKCQQCNEYRNWMLEYSPSVLFMMDHIKKLTKDKEPILTKENITCDVCDFTKGGGFHPDEGILLCANWIRNKWQLEDILTHELVHVYDYLKFNLDMNNLRHHACTEIRASMLSGECRIWQEIKKTGLGNFGKKFQDCIKRRAVLSVSSNPICKSPEEAEKVVSTVWNSCFNDTRPFERVYR</sequence>
<evidence type="ECO:0000250" key="1"/>
<evidence type="ECO:0000255" key="2">
    <source>
        <dbReference type="PROSITE-ProRule" id="PRU10095"/>
    </source>
</evidence>
<evidence type="ECO:0000305" key="3"/>
<name>ATP23_CANAL</name>
<protein>
    <recommendedName>
        <fullName>Mitochondrial inner membrane protease ATP23</fullName>
        <ecNumber>3.4.24.-</ecNumber>
    </recommendedName>
</protein>
<comment type="function">
    <text evidence="1">Has a dual role in the assembly of mitochondrial ATPase. Acts as a protease that removes N-terminal residues of mitochondrial ATPase CF(0) subunit 6 at the intermembrane space side. Also involved in the correct assembly of the membrane-embedded ATPase CF(0) particle, probably mediating association of subunit 6 with the subunit 9 ring (By similarity).</text>
</comment>
<comment type="subcellular location">
    <subcellularLocation>
        <location>Mitochondrion inner membrane</location>
        <topology>Peripheral membrane protein</topology>
        <orientation>Intermembrane side</orientation>
    </subcellularLocation>
    <text evidence="1">Associates loosely with the inner membrane.</text>
</comment>
<comment type="similarity">
    <text evidence="3">Belongs to the peptidase M76 family.</text>
</comment>